<feature type="signal peptide" evidence="1">
    <location>
        <begin position="1"/>
        <end position="30"/>
    </location>
</feature>
<feature type="chain" id="PRO_0000448310" description="Alpha-1,4-L-rhamnosidase">
    <location>
        <begin position="31"/>
        <end position="487"/>
    </location>
</feature>
<feature type="active site" description="Proton donor" evidence="2">
    <location>
        <position position="199"/>
    </location>
</feature>
<reference key="1">
    <citation type="journal article" date="2013" name="Appl. Environ. Microbiol.">
        <title>The genome of the alga-associated marine flavobacterium Formosa agariphila KMM 3901T reveals a broad potential for degradation of algal polysaccharides.</title>
        <authorList>
            <person name="Mann A.J."/>
            <person name="Hahnke R.L."/>
            <person name="Huang S."/>
            <person name="Werner J."/>
            <person name="Xing P."/>
            <person name="Barbeyron T."/>
            <person name="Huettel B."/>
            <person name="Stueber K."/>
            <person name="Reinhardt R."/>
            <person name="Harder J."/>
            <person name="Gloeckner F.O."/>
            <person name="Amann R.I."/>
            <person name="Teeling H."/>
        </authorList>
    </citation>
    <scope>NUCLEOTIDE SEQUENCE [LARGE SCALE GENOMIC DNA]</scope>
    <source>
        <strain>DSM 15362 / KCTC 12365 / LMG 23005 / KMM 3901 / M-2Alg 35-1</strain>
    </source>
</reference>
<reference key="2">
    <citation type="journal article" date="2019" name="Nat. Chem. Biol.">
        <title>A marine bacterial enzymatic cascade degrades the algal polysaccharide ulvan.</title>
        <authorList>
            <person name="Reisky L."/>
            <person name="Prechoux A."/>
            <person name="Zuehlke M.K."/>
            <person name="Baeumgen M."/>
            <person name="Robb C.S."/>
            <person name="Gerlach N."/>
            <person name="Roret T."/>
            <person name="Stanetty C."/>
            <person name="Larocque R."/>
            <person name="Michel G."/>
            <person name="Song T."/>
            <person name="Markert S."/>
            <person name="Unfried F."/>
            <person name="Mihovilovic M.D."/>
            <person name="Trautwein-Schult A."/>
            <person name="Becher D."/>
            <person name="Schweder T."/>
            <person name="Bornscheuer U.T."/>
            <person name="Hehemann J.H."/>
        </authorList>
    </citation>
    <scope>FUNCTION</scope>
    <scope>SUBCELLULAR LOCATION</scope>
    <scope>INDUCTION</scope>
</reference>
<name>PLH31_FORAG</name>
<accession>T2KM23</accession>
<dbReference type="EC" id="3.2.1.-" evidence="3"/>
<dbReference type="EMBL" id="HG315671">
    <property type="protein sequence ID" value="CDF79932.1"/>
    <property type="molecule type" value="Genomic_DNA"/>
</dbReference>
<dbReference type="RefSeq" id="WP_038530534.1">
    <property type="nucleotide sequence ID" value="NZ_HG315671.1"/>
</dbReference>
<dbReference type="STRING" id="1347342.BN863_22200"/>
<dbReference type="PATRIC" id="fig|1347342.6.peg.2227"/>
<dbReference type="eggNOG" id="COG3664">
    <property type="taxonomic scope" value="Bacteria"/>
</dbReference>
<dbReference type="HOGENOM" id="CLU_559913_0_0_10"/>
<dbReference type="OrthoDB" id="9776971at2"/>
<dbReference type="Proteomes" id="UP000016160">
    <property type="component" value="Chromosome"/>
</dbReference>
<dbReference type="GO" id="GO:0042597">
    <property type="term" value="C:periplasmic space"/>
    <property type="evidence" value="ECO:0007669"/>
    <property type="project" value="UniProtKB-SubCell"/>
</dbReference>
<dbReference type="GO" id="GO:0016798">
    <property type="term" value="F:hydrolase activity, acting on glycosyl bonds"/>
    <property type="evidence" value="ECO:0007669"/>
    <property type="project" value="UniProtKB-KW"/>
</dbReference>
<dbReference type="Gene3D" id="3.20.20.80">
    <property type="entry name" value="Glycosidases"/>
    <property type="match status" value="1"/>
</dbReference>
<dbReference type="InterPro" id="IPR053700">
    <property type="entry name" value="GH39"/>
</dbReference>
<dbReference type="InterPro" id="IPR049166">
    <property type="entry name" value="GH39_cat"/>
</dbReference>
<dbReference type="InterPro" id="IPR017853">
    <property type="entry name" value="Glycoside_hydrolase_SF"/>
</dbReference>
<dbReference type="NCBIfam" id="NF042992">
    <property type="entry name" value="alph1_4rhamsidase"/>
    <property type="match status" value="1"/>
</dbReference>
<dbReference type="Pfam" id="PF01229">
    <property type="entry name" value="Glyco_hydro_39"/>
    <property type="match status" value="1"/>
</dbReference>
<dbReference type="SUPFAM" id="SSF51445">
    <property type="entry name" value="(Trans)glycosidases"/>
    <property type="match status" value="1"/>
</dbReference>
<gene>
    <name type="ORF">BN863_22200</name>
</gene>
<sequence>MKNKKRLCHILKYIITCFLFGVIFIIPIQAQIVLQTDFTDSENARQNIDYHFNVFNRITPLNGVKIKTPLGKPRVCIVRPLGGIVKNGKPDISKDSYKWDKKSKTFYTDFTVLKNQIDGVINSGYAIHQIVLDNPSWAFQRNKNGELVADSLKVSTYGNAEPPKDYNAWSNYLKDVLKFLVNTYGEESMLKIQFNIGREIGTPSHWSGSKEAFFEFYKISSSAIREVLPTAKVGTHFLWGSSKNAWGTDFIKWSKANNVHYDFIGVSFYPFYNKPDRTLFKEVYAKDFAVIKDIPEWHKNAKLEMHEYALIKSLNKAGNAFENAPKAQQNSFIVGLMKMFYEHNMQNVFQWGQGTNFEAAQEALFSIQGQTYYTSTKNGKPLLETNDVDAIFIKDVSNNIYNIMAYNYNANPNATTDEHLNLKAKLDVPPGTKVKVRFALYNKEKDTMSWSEWKEEATQGNEKSKSVISLNAELPVFSFLKYEVKVQ</sequence>
<keyword id="KW-0326">Glycosidase</keyword>
<keyword id="KW-0378">Hydrolase</keyword>
<keyword id="KW-0574">Periplasm</keyword>
<keyword id="KW-1185">Reference proteome</keyword>
<keyword id="KW-0732">Signal</keyword>
<protein>
    <recommendedName>
        <fullName evidence="4">Alpha-1,4-L-rhamnosidase</fullName>
        <ecNumber evidence="3">3.2.1.-</ecNumber>
    </recommendedName>
    <alternativeName>
        <fullName evidence="5">Glycosyl hydrolase 39 family protein P31</fullName>
        <shortName evidence="4">P31_GH39</shortName>
    </alternativeName>
    <alternativeName>
        <fullName evidence="4">Polysaccharide utilization locus H protein P31</fullName>
        <shortName>PUL H protein P31</shortName>
    </alternativeName>
</protein>
<comment type="function">
    <text evidence="3 6">Alpha-rhamnosidase involved in ulvan degradation (PubMed:31285597). Ulvan is the main polysaccharide component of the Ulvales (green seaweed) cell wall. It is composed of disaccharide building blocks comprising 3-sulfated rhamnose (Rha3S) linked to D-glucuronic acid (GlcA), L-iduronic acid (IduA), or D-xylose (Xyl) (Probable). Endo-acting alpha-1,4-L-rhamnosidase cleaves rhamnose sections interspersed between xylose residues within the polymer, degrading larger oligomers with consecutive Xyl-Rha3S units that are resistant to the ulvan lyases and producing dimers Xyl-Rha3S and Xyl2S-Rha3S as the smallest products (PubMed:31285597).</text>
</comment>
<comment type="subcellular location">
    <subcellularLocation>
        <location evidence="3">Periplasm</location>
    </subcellularLocation>
</comment>
<comment type="induction">
    <text evidence="3">By ulvan and rhamnose.</text>
</comment>
<comment type="similarity">
    <text evidence="5">Belongs to the glycosyl hydrolase 39 family.</text>
</comment>
<organism>
    <name type="scientific">Formosa agariphila (strain DSM 15362 / KCTC 12365 / LMG 23005 / KMM 3901 / M-2Alg 35-1)</name>
    <dbReference type="NCBI Taxonomy" id="1347342"/>
    <lineage>
        <taxon>Bacteria</taxon>
        <taxon>Pseudomonadati</taxon>
        <taxon>Bacteroidota</taxon>
        <taxon>Flavobacteriia</taxon>
        <taxon>Flavobacteriales</taxon>
        <taxon>Flavobacteriaceae</taxon>
        <taxon>Formosa</taxon>
    </lineage>
</organism>
<evidence type="ECO:0000255" key="1"/>
<evidence type="ECO:0000255" key="2">
    <source>
        <dbReference type="PROSITE-ProRule" id="PRU10068"/>
    </source>
</evidence>
<evidence type="ECO:0000269" key="3">
    <source>
    </source>
</evidence>
<evidence type="ECO:0000303" key="4">
    <source>
    </source>
</evidence>
<evidence type="ECO:0000305" key="5"/>
<evidence type="ECO:0000305" key="6">
    <source>
    </source>
</evidence>
<proteinExistence type="evidence at transcript level"/>